<name>RS20_POLSJ</name>
<feature type="chain" id="PRO_0000260130" description="Small ribosomal subunit protein bS20">
    <location>
        <begin position="1"/>
        <end position="103"/>
    </location>
</feature>
<feature type="region of interest" description="Disordered" evidence="2">
    <location>
        <begin position="1"/>
        <end position="31"/>
    </location>
</feature>
<feature type="compositionally biased region" description="Basic residues" evidence="2">
    <location>
        <begin position="1"/>
        <end position="20"/>
    </location>
</feature>
<reference key="1">
    <citation type="journal article" date="2008" name="Appl. Environ. Microbiol.">
        <title>The genome of Polaromonas sp. strain JS666: insights into the evolution of a hydrocarbon- and xenobiotic-degrading bacterium, and features of relevance to biotechnology.</title>
        <authorList>
            <person name="Mattes T.E."/>
            <person name="Alexander A.K."/>
            <person name="Richardson P.M."/>
            <person name="Munk A.C."/>
            <person name="Han C.S."/>
            <person name="Stothard P."/>
            <person name="Coleman N.V."/>
        </authorList>
    </citation>
    <scope>NUCLEOTIDE SEQUENCE [LARGE SCALE GENOMIC DNA]</scope>
    <source>
        <strain>JS666 / ATCC BAA-500</strain>
    </source>
</reference>
<keyword id="KW-1185">Reference proteome</keyword>
<keyword id="KW-0687">Ribonucleoprotein</keyword>
<keyword id="KW-0689">Ribosomal protein</keyword>
<keyword id="KW-0694">RNA-binding</keyword>
<keyword id="KW-0699">rRNA-binding</keyword>
<organism>
    <name type="scientific">Polaromonas sp. (strain JS666 / ATCC BAA-500)</name>
    <dbReference type="NCBI Taxonomy" id="296591"/>
    <lineage>
        <taxon>Bacteria</taxon>
        <taxon>Pseudomonadati</taxon>
        <taxon>Pseudomonadota</taxon>
        <taxon>Betaproteobacteria</taxon>
        <taxon>Burkholderiales</taxon>
        <taxon>Comamonadaceae</taxon>
        <taxon>Polaromonas</taxon>
    </lineage>
</organism>
<gene>
    <name evidence="1" type="primary">rpsT</name>
    <name type="ordered locus">Bpro_3570</name>
</gene>
<evidence type="ECO:0000255" key="1">
    <source>
        <dbReference type="HAMAP-Rule" id="MF_00500"/>
    </source>
</evidence>
<evidence type="ECO:0000256" key="2">
    <source>
        <dbReference type="SAM" id="MobiDB-lite"/>
    </source>
</evidence>
<evidence type="ECO:0000305" key="3"/>
<sequence>MATAKPKKKNPRLASGRKRVRQDTKLNAANTSLRSKYRTAVKNVEKAVAAGDKDKAKDLFAKAQSIVDIVADKGIFHKNKAARDKSRLSAKVKALALAPAKAA</sequence>
<proteinExistence type="inferred from homology"/>
<dbReference type="EMBL" id="CP000316">
    <property type="protein sequence ID" value="ABE45478.1"/>
    <property type="molecule type" value="Genomic_DNA"/>
</dbReference>
<dbReference type="RefSeq" id="WP_011484472.1">
    <property type="nucleotide sequence ID" value="NC_007948.1"/>
</dbReference>
<dbReference type="SMR" id="Q126R4"/>
<dbReference type="STRING" id="296591.Bpro_3570"/>
<dbReference type="KEGG" id="pol:Bpro_3570"/>
<dbReference type="eggNOG" id="COG0268">
    <property type="taxonomic scope" value="Bacteria"/>
</dbReference>
<dbReference type="HOGENOM" id="CLU_160655_4_0_4"/>
<dbReference type="OrthoDB" id="9807974at2"/>
<dbReference type="Proteomes" id="UP000001983">
    <property type="component" value="Chromosome"/>
</dbReference>
<dbReference type="GO" id="GO:0005829">
    <property type="term" value="C:cytosol"/>
    <property type="evidence" value="ECO:0007669"/>
    <property type="project" value="TreeGrafter"/>
</dbReference>
<dbReference type="GO" id="GO:0015935">
    <property type="term" value="C:small ribosomal subunit"/>
    <property type="evidence" value="ECO:0007669"/>
    <property type="project" value="TreeGrafter"/>
</dbReference>
<dbReference type="GO" id="GO:0070181">
    <property type="term" value="F:small ribosomal subunit rRNA binding"/>
    <property type="evidence" value="ECO:0007669"/>
    <property type="project" value="TreeGrafter"/>
</dbReference>
<dbReference type="GO" id="GO:0003735">
    <property type="term" value="F:structural constituent of ribosome"/>
    <property type="evidence" value="ECO:0007669"/>
    <property type="project" value="InterPro"/>
</dbReference>
<dbReference type="GO" id="GO:0006412">
    <property type="term" value="P:translation"/>
    <property type="evidence" value="ECO:0007669"/>
    <property type="project" value="UniProtKB-UniRule"/>
</dbReference>
<dbReference type="FunFam" id="1.20.58.110:FF:000001">
    <property type="entry name" value="30S ribosomal protein S20"/>
    <property type="match status" value="1"/>
</dbReference>
<dbReference type="Gene3D" id="1.20.58.110">
    <property type="entry name" value="Ribosomal protein S20"/>
    <property type="match status" value="1"/>
</dbReference>
<dbReference type="HAMAP" id="MF_00500">
    <property type="entry name" value="Ribosomal_bS20"/>
    <property type="match status" value="1"/>
</dbReference>
<dbReference type="InterPro" id="IPR002583">
    <property type="entry name" value="Ribosomal_bS20"/>
</dbReference>
<dbReference type="InterPro" id="IPR036510">
    <property type="entry name" value="Ribosomal_bS20_sf"/>
</dbReference>
<dbReference type="NCBIfam" id="TIGR00029">
    <property type="entry name" value="S20"/>
    <property type="match status" value="1"/>
</dbReference>
<dbReference type="PANTHER" id="PTHR33398">
    <property type="entry name" value="30S RIBOSOMAL PROTEIN S20"/>
    <property type="match status" value="1"/>
</dbReference>
<dbReference type="PANTHER" id="PTHR33398:SF1">
    <property type="entry name" value="SMALL RIBOSOMAL SUBUNIT PROTEIN BS20C"/>
    <property type="match status" value="1"/>
</dbReference>
<dbReference type="Pfam" id="PF01649">
    <property type="entry name" value="Ribosomal_S20p"/>
    <property type="match status" value="1"/>
</dbReference>
<dbReference type="SUPFAM" id="SSF46992">
    <property type="entry name" value="Ribosomal protein S20"/>
    <property type="match status" value="1"/>
</dbReference>
<accession>Q126R4</accession>
<comment type="function">
    <text evidence="1">Binds directly to 16S ribosomal RNA.</text>
</comment>
<comment type="similarity">
    <text evidence="1">Belongs to the bacterial ribosomal protein bS20 family.</text>
</comment>
<protein>
    <recommendedName>
        <fullName evidence="1">Small ribosomal subunit protein bS20</fullName>
    </recommendedName>
    <alternativeName>
        <fullName evidence="3">30S ribosomal protein S20</fullName>
    </alternativeName>
</protein>